<evidence type="ECO:0000255" key="1">
    <source>
        <dbReference type="HAMAP-Rule" id="MF_00134"/>
    </source>
</evidence>
<feature type="chain" id="PRO_1000057869" description="Indole-3-glycerol phosphate synthase">
    <location>
        <begin position="1"/>
        <end position="261"/>
    </location>
</feature>
<sequence>MILDKIIRYKKNKVKEEKVAVPLGEIMKQIEDMEEARNFKAALVGRESISMIAEVKKASPSKGIIKKDFNPVKIAAEYEKNRVDAISVLTEDQFFLGDNRYLQDIRKMTTIPLLRKDFMIDAYQIYQSKALGADAILLIAAALTKKEMIAFQKIAAEIGIYSLVEVHNKEELEMILETGAEIIGINNRDLKTFDTTLDRTAELLPFIPKDKIVVSESGIKTNQDMKLLKNYGINAVLMGEGLMRADSIGEKLRELRSGLCD</sequence>
<protein>
    <recommendedName>
        <fullName evidence="1">Indole-3-glycerol phosphate synthase</fullName>
        <shortName evidence="1">IGPS</shortName>
        <ecNumber evidence="1">4.1.1.48</ecNumber>
    </recommendedName>
</protein>
<gene>
    <name evidence="1" type="primary">trpC</name>
    <name type="ordered locus">Amet_1080</name>
</gene>
<reference key="1">
    <citation type="journal article" date="2016" name="Genome Announc.">
        <title>Complete genome sequence of Alkaliphilus metalliredigens strain QYMF, an alkaliphilic and metal-reducing bacterium isolated from borax-contaminated leachate ponds.</title>
        <authorList>
            <person name="Hwang C."/>
            <person name="Copeland A."/>
            <person name="Lucas S."/>
            <person name="Lapidus A."/>
            <person name="Barry K."/>
            <person name="Detter J.C."/>
            <person name="Glavina Del Rio T."/>
            <person name="Hammon N."/>
            <person name="Israni S."/>
            <person name="Dalin E."/>
            <person name="Tice H."/>
            <person name="Pitluck S."/>
            <person name="Chertkov O."/>
            <person name="Brettin T."/>
            <person name="Bruce D."/>
            <person name="Han C."/>
            <person name="Schmutz J."/>
            <person name="Larimer F."/>
            <person name="Land M.L."/>
            <person name="Hauser L."/>
            <person name="Kyrpides N."/>
            <person name="Mikhailova N."/>
            <person name="Ye Q."/>
            <person name="Zhou J."/>
            <person name="Richardson P."/>
            <person name="Fields M.W."/>
        </authorList>
    </citation>
    <scope>NUCLEOTIDE SEQUENCE [LARGE SCALE GENOMIC DNA]</scope>
    <source>
        <strain>QYMF</strain>
    </source>
</reference>
<organism>
    <name type="scientific">Alkaliphilus metalliredigens (strain QYMF)</name>
    <dbReference type="NCBI Taxonomy" id="293826"/>
    <lineage>
        <taxon>Bacteria</taxon>
        <taxon>Bacillati</taxon>
        <taxon>Bacillota</taxon>
        <taxon>Clostridia</taxon>
        <taxon>Peptostreptococcales</taxon>
        <taxon>Natronincolaceae</taxon>
        <taxon>Alkaliphilus</taxon>
    </lineage>
</organism>
<accession>A6TM74</accession>
<name>TRPC_ALKMQ</name>
<comment type="catalytic activity">
    <reaction evidence="1">
        <text>1-(2-carboxyphenylamino)-1-deoxy-D-ribulose 5-phosphate + H(+) = (1S,2R)-1-C-(indol-3-yl)glycerol 3-phosphate + CO2 + H2O</text>
        <dbReference type="Rhea" id="RHEA:23476"/>
        <dbReference type="ChEBI" id="CHEBI:15377"/>
        <dbReference type="ChEBI" id="CHEBI:15378"/>
        <dbReference type="ChEBI" id="CHEBI:16526"/>
        <dbReference type="ChEBI" id="CHEBI:58613"/>
        <dbReference type="ChEBI" id="CHEBI:58866"/>
        <dbReference type="EC" id="4.1.1.48"/>
    </reaction>
</comment>
<comment type="pathway">
    <text evidence="1">Amino-acid biosynthesis; L-tryptophan biosynthesis; L-tryptophan from chorismate: step 4/5.</text>
</comment>
<comment type="similarity">
    <text evidence="1">Belongs to the TrpC family.</text>
</comment>
<proteinExistence type="inferred from homology"/>
<keyword id="KW-0028">Amino-acid biosynthesis</keyword>
<keyword id="KW-0057">Aromatic amino acid biosynthesis</keyword>
<keyword id="KW-0210">Decarboxylase</keyword>
<keyword id="KW-0456">Lyase</keyword>
<keyword id="KW-1185">Reference proteome</keyword>
<keyword id="KW-0822">Tryptophan biosynthesis</keyword>
<dbReference type="EC" id="4.1.1.48" evidence="1"/>
<dbReference type="EMBL" id="CP000724">
    <property type="protein sequence ID" value="ABR47292.1"/>
    <property type="molecule type" value="Genomic_DNA"/>
</dbReference>
<dbReference type="RefSeq" id="WP_012062334.1">
    <property type="nucleotide sequence ID" value="NC_009633.1"/>
</dbReference>
<dbReference type="SMR" id="A6TM74"/>
<dbReference type="STRING" id="293826.Amet_1080"/>
<dbReference type="KEGG" id="amt:Amet_1080"/>
<dbReference type="eggNOG" id="COG0134">
    <property type="taxonomic scope" value="Bacteria"/>
</dbReference>
<dbReference type="HOGENOM" id="CLU_034247_2_0_9"/>
<dbReference type="OrthoDB" id="9804217at2"/>
<dbReference type="UniPathway" id="UPA00035">
    <property type="reaction ID" value="UER00043"/>
</dbReference>
<dbReference type="Proteomes" id="UP000001572">
    <property type="component" value="Chromosome"/>
</dbReference>
<dbReference type="GO" id="GO:0004425">
    <property type="term" value="F:indole-3-glycerol-phosphate synthase activity"/>
    <property type="evidence" value="ECO:0007669"/>
    <property type="project" value="UniProtKB-UniRule"/>
</dbReference>
<dbReference type="GO" id="GO:0004640">
    <property type="term" value="F:phosphoribosylanthranilate isomerase activity"/>
    <property type="evidence" value="ECO:0007669"/>
    <property type="project" value="TreeGrafter"/>
</dbReference>
<dbReference type="GO" id="GO:0000162">
    <property type="term" value="P:L-tryptophan biosynthetic process"/>
    <property type="evidence" value="ECO:0007669"/>
    <property type="project" value="UniProtKB-UniRule"/>
</dbReference>
<dbReference type="CDD" id="cd00331">
    <property type="entry name" value="IGPS"/>
    <property type="match status" value="1"/>
</dbReference>
<dbReference type="FunFam" id="3.20.20.70:FF:000024">
    <property type="entry name" value="Indole-3-glycerol phosphate synthase"/>
    <property type="match status" value="1"/>
</dbReference>
<dbReference type="Gene3D" id="3.20.20.70">
    <property type="entry name" value="Aldolase class I"/>
    <property type="match status" value="1"/>
</dbReference>
<dbReference type="HAMAP" id="MF_00134_B">
    <property type="entry name" value="IGPS_B"/>
    <property type="match status" value="1"/>
</dbReference>
<dbReference type="InterPro" id="IPR013785">
    <property type="entry name" value="Aldolase_TIM"/>
</dbReference>
<dbReference type="InterPro" id="IPR045186">
    <property type="entry name" value="Indole-3-glycerol_P_synth"/>
</dbReference>
<dbReference type="InterPro" id="IPR013798">
    <property type="entry name" value="Indole-3-glycerol_P_synth_dom"/>
</dbReference>
<dbReference type="InterPro" id="IPR001468">
    <property type="entry name" value="Indole-3-GlycerolPSynthase_CS"/>
</dbReference>
<dbReference type="InterPro" id="IPR011060">
    <property type="entry name" value="RibuloseP-bd_barrel"/>
</dbReference>
<dbReference type="NCBIfam" id="NF001377">
    <property type="entry name" value="PRK00278.2-4"/>
    <property type="match status" value="1"/>
</dbReference>
<dbReference type="PANTHER" id="PTHR22854:SF2">
    <property type="entry name" value="INDOLE-3-GLYCEROL-PHOSPHATE SYNTHASE"/>
    <property type="match status" value="1"/>
</dbReference>
<dbReference type="PANTHER" id="PTHR22854">
    <property type="entry name" value="TRYPTOPHAN BIOSYNTHESIS PROTEIN"/>
    <property type="match status" value="1"/>
</dbReference>
<dbReference type="Pfam" id="PF00218">
    <property type="entry name" value="IGPS"/>
    <property type="match status" value="1"/>
</dbReference>
<dbReference type="SUPFAM" id="SSF51366">
    <property type="entry name" value="Ribulose-phoshate binding barrel"/>
    <property type="match status" value="1"/>
</dbReference>
<dbReference type="PROSITE" id="PS00614">
    <property type="entry name" value="IGPS"/>
    <property type="match status" value="1"/>
</dbReference>